<proteinExistence type="inferred from homology"/>
<keyword id="KW-0067">ATP-binding</keyword>
<keyword id="KW-0418">Kinase</keyword>
<keyword id="KW-0460">Magnesium</keyword>
<keyword id="KW-0479">Metal-binding</keyword>
<keyword id="KW-0511">Multifunctional enzyme</keyword>
<keyword id="KW-0547">Nucleotide-binding</keyword>
<keyword id="KW-0723">Serine/threonine-protein kinase</keyword>
<keyword id="KW-0808">Transferase</keyword>
<gene>
    <name evidence="1" type="primary">hprK</name>
    <name type="ordered locus">Vapar_0405</name>
</gene>
<protein>
    <recommendedName>
        <fullName evidence="1">HPr kinase/phosphorylase</fullName>
        <shortName evidence="1">HPrK/P</shortName>
        <ecNumber evidence="1">2.7.11.-</ecNumber>
        <ecNumber evidence="1">2.7.4.-</ecNumber>
    </recommendedName>
    <alternativeName>
        <fullName evidence="1">HPr(Ser) kinase/phosphorylase</fullName>
    </alternativeName>
</protein>
<organism>
    <name type="scientific">Variovorax paradoxus (strain S110)</name>
    <dbReference type="NCBI Taxonomy" id="543728"/>
    <lineage>
        <taxon>Bacteria</taxon>
        <taxon>Pseudomonadati</taxon>
        <taxon>Pseudomonadota</taxon>
        <taxon>Betaproteobacteria</taxon>
        <taxon>Burkholderiales</taxon>
        <taxon>Comamonadaceae</taxon>
        <taxon>Variovorax</taxon>
    </lineage>
</organism>
<feature type="chain" id="PRO_1000214112" description="HPr kinase/phosphorylase">
    <location>
        <begin position="1"/>
        <end position="319"/>
    </location>
</feature>
<feature type="region of interest" description="Important for the catalytic mechanism of both phosphorylation and dephosphorylation" evidence="1">
    <location>
        <begin position="209"/>
        <end position="218"/>
    </location>
</feature>
<feature type="region of interest" description="Important for the catalytic mechanism of dephosphorylation" evidence="1">
    <location>
        <begin position="273"/>
        <end position="278"/>
    </location>
</feature>
<feature type="active site" evidence="1">
    <location>
        <position position="146"/>
    </location>
</feature>
<feature type="active site" evidence="1">
    <location>
        <position position="167"/>
    </location>
</feature>
<feature type="active site" description="Proton acceptor; for phosphorylation activity. Proton donor; for dephosphorylation activity" evidence="1">
    <location>
        <position position="185"/>
    </location>
</feature>
<feature type="active site" evidence="1">
    <location>
        <position position="252"/>
    </location>
</feature>
<feature type="binding site" evidence="1">
    <location>
        <begin position="161"/>
        <end position="168"/>
    </location>
    <ligand>
        <name>ATP</name>
        <dbReference type="ChEBI" id="CHEBI:30616"/>
    </ligand>
</feature>
<feature type="binding site" evidence="1">
    <location>
        <position position="168"/>
    </location>
    <ligand>
        <name>Mg(2+)</name>
        <dbReference type="ChEBI" id="CHEBI:18420"/>
    </ligand>
</feature>
<feature type="binding site" evidence="1">
    <location>
        <position position="210"/>
    </location>
    <ligand>
        <name>Mg(2+)</name>
        <dbReference type="ChEBI" id="CHEBI:18420"/>
    </ligand>
</feature>
<accession>C5CJ68</accession>
<name>HPRK_VARPS</name>
<comment type="function">
    <text evidence="1">Catalyzes the ATP- as well as the pyrophosphate-dependent phosphorylation of a specific serine residue in HPr, a phosphocarrier protein of the phosphoenolpyruvate-dependent sugar phosphotransferase system (PTS). HprK/P also catalyzes the pyrophosphate-producing, inorganic phosphate-dependent dephosphorylation (phosphorolysis) of seryl-phosphorylated HPr (P-Ser-HPr).</text>
</comment>
<comment type="catalytic activity">
    <reaction evidence="1">
        <text>[HPr protein]-L-serine + ATP = [HPr protein]-O-phospho-L-serine + ADP + H(+)</text>
        <dbReference type="Rhea" id="RHEA:46600"/>
        <dbReference type="Rhea" id="RHEA-COMP:11602"/>
        <dbReference type="Rhea" id="RHEA-COMP:11603"/>
        <dbReference type="ChEBI" id="CHEBI:15378"/>
        <dbReference type="ChEBI" id="CHEBI:29999"/>
        <dbReference type="ChEBI" id="CHEBI:30616"/>
        <dbReference type="ChEBI" id="CHEBI:83421"/>
        <dbReference type="ChEBI" id="CHEBI:456216"/>
    </reaction>
</comment>
<comment type="catalytic activity">
    <reaction evidence="1">
        <text>[HPr protein]-O-phospho-L-serine + phosphate + H(+) = [HPr protein]-L-serine + diphosphate</text>
        <dbReference type="Rhea" id="RHEA:46604"/>
        <dbReference type="Rhea" id="RHEA-COMP:11602"/>
        <dbReference type="Rhea" id="RHEA-COMP:11603"/>
        <dbReference type="ChEBI" id="CHEBI:15378"/>
        <dbReference type="ChEBI" id="CHEBI:29999"/>
        <dbReference type="ChEBI" id="CHEBI:33019"/>
        <dbReference type="ChEBI" id="CHEBI:43474"/>
        <dbReference type="ChEBI" id="CHEBI:83421"/>
    </reaction>
</comment>
<comment type="cofactor">
    <cofactor evidence="1">
        <name>Mg(2+)</name>
        <dbReference type="ChEBI" id="CHEBI:18420"/>
    </cofactor>
</comment>
<comment type="subunit">
    <text evidence="1">Homohexamer.</text>
</comment>
<comment type="domain">
    <text evidence="1">The Walker A ATP-binding motif also binds Pi and PPi.</text>
</comment>
<comment type="miscellaneous">
    <text evidence="1">Both phosphorylation and phosphorolysis are carried out by the same active site and suggest a common mechanism for both reactions.</text>
</comment>
<comment type="similarity">
    <text evidence="1">Belongs to the HPrK/P family.</text>
</comment>
<evidence type="ECO:0000255" key="1">
    <source>
        <dbReference type="HAMAP-Rule" id="MF_01249"/>
    </source>
</evidence>
<dbReference type="EC" id="2.7.11.-" evidence="1"/>
<dbReference type="EC" id="2.7.4.-" evidence="1"/>
<dbReference type="EMBL" id="CP001635">
    <property type="protein sequence ID" value="ACS17068.1"/>
    <property type="molecule type" value="Genomic_DNA"/>
</dbReference>
<dbReference type="SMR" id="C5CJ68"/>
<dbReference type="STRING" id="543728.Vapar_0405"/>
<dbReference type="KEGG" id="vap:Vapar_0405"/>
<dbReference type="eggNOG" id="COG1493">
    <property type="taxonomic scope" value="Bacteria"/>
</dbReference>
<dbReference type="HOGENOM" id="CLU_052030_0_2_4"/>
<dbReference type="OrthoDB" id="9778803at2"/>
<dbReference type="GO" id="GO:0005524">
    <property type="term" value="F:ATP binding"/>
    <property type="evidence" value="ECO:0007669"/>
    <property type="project" value="UniProtKB-UniRule"/>
</dbReference>
<dbReference type="GO" id="GO:0000287">
    <property type="term" value="F:magnesium ion binding"/>
    <property type="evidence" value="ECO:0007669"/>
    <property type="project" value="UniProtKB-UniRule"/>
</dbReference>
<dbReference type="GO" id="GO:0000155">
    <property type="term" value="F:phosphorelay sensor kinase activity"/>
    <property type="evidence" value="ECO:0007669"/>
    <property type="project" value="InterPro"/>
</dbReference>
<dbReference type="GO" id="GO:0004674">
    <property type="term" value="F:protein serine/threonine kinase activity"/>
    <property type="evidence" value="ECO:0007669"/>
    <property type="project" value="UniProtKB-KW"/>
</dbReference>
<dbReference type="GO" id="GO:0004712">
    <property type="term" value="F:protein serine/threonine/tyrosine kinase activity"/>
    <property type="evidence" value="ECO:0007669"/>
    <property type="project" value="UniProtKB-UniRule"/>
</dbReference>
<dbReference type="GO" id="GO:0006109">
    <property type="term" value="P:regulation of carbohydrate metabolic process"/>
    <property type="evidence" value="ECO:0007669"/>
    <property type="project" value="UniProtKB-UniRule"/>
</dbReference>
<dbReference type="CDD" id="cd01918">
    <property type="entry name" value="HprK_C"/>
    <property type="match status" value="1"/>
</dbReference>
<dbReference type="Gene3D" id="3.40.1390.20">
    <property type="entry name" value="HprK N-terminal domain-like"/>
    <property type="match status" value="1"/>
</dbReference>
<dbReference type="Gene3D" id="3.40.50.300">
    <property type="entry name" value="P-loop containing nucleotide triphosphate hydrolases"/>
    <property type="match status" value="1"/>
</dbReference>
<dbReference type="HAMAP" id="MF_01249">
    <property type="entry name" value="HPr_kinase"/>
    <property type="match status" value="1"/>
</dbReference>
<dbReference type="InterPro" id="IPR003755">
    <property type="entry name" value="HPr(Ser)_kin/Pase"/>
</dbReference>
<dbReference type="InterPro" id="IPR011104">
    <property type="entry name" value="Hpr_kin/Pase_C"/>
</dbReference>
<dbReference type="InterPro" id="IPR011126">
    <property type="entry name" value="Hpr_kin/Pase_Hpr_N"/>
</dbReference>
<dbReference type="InterPro" id="IPR027417">
    <property type="entry name" value="P-loop_NTPase"/>
</dbReference>
<dbReference type="InterPro" id="IPR028979">
    <property type="entry name" value="Ser_kin/Pase_Hpr-like_N_sf"/>
</dbReference>
<dbReference type="NCBIfam" id="TIGR00679">
    <property type="entry name" value="hpr-ser"/>
    <property type="match status" value="1"/>
</dbReference>
<dbReference type="PANTHER" id="PTHR30305:SF1">
    <property type="entry name" value="HPR KINASE_PHOSPHORYLASE"/>
    <property type="match status" value="1"/>
</dbReference>
<dbReference type="PANTHER" id="PTHR30305">
    <property type="entry name" value="PROTEIN YJDM-RELATED"/>
    <property type="match status" value="1"/>
</dbReference>
<dbReference type="Pfam" id="PF07475">
    <property type="entry name" value="Hpr_kinase_C"/>
    <property type="match status" value="1"/>
</dbReference>
<dbReference type="Pfam" id="PF02603">
    <property type="entry name" value="Hpr_kinase_N"/>
    <property type="match status" value="1"/>
</dbReference>
<dbReference type="SUPFAM" id="SSF75138">
    <property type="entry name" value="HprK N-terminal domain-like"/>
    <property type="match status" value="1"/>
</dbReference>
<dbReference type="SUPFAM" id="SSF53795">
    <property type="entry name" value="PEP carboxykinase-like"/>
    <property type="match status" value="1"/>
</dbReference>
<reference key="1">
    <citation type="journal article" date="2011" name="J. Bacteriol.">
        <title>Complete genome sequence of the metabolically versatile plant growth-promoting endophyte, Variovorax paradoxus S110.</title>
        <authorList>
            <person name="Han J.I."/>
            <person name="Choi H.K."/>
            <person name="Lee S.W."/>
            <person name="Orwin P.M."/>
            <person name="Kim J."/>
            <person name="Laroe S.L."/>
            <person name="Kim T.G."/>
            <person name="O'Neil J."/>
            <person name="Leadbetter J.R."/>
            <person name="Lee S.Y."/>
            <person name="Hur C.G."/>
            <person name="Spain J.C."/>
            <person name="Ovchinnikova G."/>
            <person name="Goodwin L."/>
            <person name="Han C."/>
        </authorList>
    </citation>
    <scope>NUCLEOTIDE SEQUENCE [LARGE SCALE GENOMIC DNA]</scope>
    <source>
        <strain>S110</strain>
    </source>
</reference>
<sequence length="319" mass="35484">MKPTVISADAMFEEFRGSLRWEWLAGLGASERQFDPEVISRAQSAADLVGYLNYIHPYRVQILGAREVAYLTRGSQEDCARRIARIVTLEPPMLVLADGQAAPDELLSICERAQLPLFATRESSAFVIDLLRAYLSKHFAERTSMHGVFMDILGMGVMITGESGLGKSELGLELISRGNGLVADDAVDLFRINQNTIEGRCPDLLLNLLEVRGIGLLDIRAIFGETAVRRKMRLKLIVHLVRRDSFERDYERMPSAPLTQDVLGIPVRKVIIQVVAGRNIAVLVEAAVRNSILQLRGIDTYADFVARHHKAMESGRDGD</sequence>